<gene>
    <name evidence="1" type="primary">atpF</name>
    <name type="ordered locus">XC_3682</name>
</gene>
<name>ATPF_XANC8</name>
<protein>
    <recommendedName>
        <fullName evidence="1">ATP synthase subunit b</fullName>
    </recommendedName>
    <alternativeName>
        <fullName evidence="1">ATP synthase F(0) sector subunit b</fullName>
    </alternativeName>
    <alternativeName>
        <fullName evidence="1">ATPase subunit I</fullName>
    </alternativeName>
    <alternativeName>
        <fullName evidence="1">F-type ATPase subunit b</fullName>
        <shortName evidence="1">F-ATPase subunit b</shortName>
    </alternativeName>
</protein>
<sequence>MDITLTIFAQALAFAGLIWIVATKIWPPLLKAIEERQQKIAEGLAAADRSQKDLAQAQEKVNEALKDARTKANEIIDQAHARANQIIEAAKLEAIAEANRQKDLAQAEIDASATRAREELRRQVSSLAVSGAEKLLKREIDATAHKALLDELAAEI</sequence>
<feature type="chain" id="PRO_0000368868" description="ATP synthase subunit b">
    <location>
        <begin position="1"/>
        <end position="156"/>
    </location>
</feature>
<feature type="transmembrane region" description="Helical" evidence="1">
    <location>
        <begin position="3"/>
        <end position="23"/>
    </location>
</feature>
<reference key="1">
    <citation type="journal article" date="2005" name="Genome Res.">
        <title>Comparative and functional genomic analyses of the pathogenicity of phytopathogen Xanthomonas campestris pv. campestris.</title>
        <authorList>
            <person name="Qian W."/>
            <person name="Jia Y."/>
            <person name="Ren S.-X."/>
            <person name="He Y.-Q."/>
            <person name="Feng J.-X."/>
            <person name="Lu L.-F."/>
            <person name="Sun Q."/>
            <person name="Ying G."/>
            <person name="Tang D.-J."/>
            <person name="Tang H."/>
            <person name="Wu W."/>
            <person name="Hao P."/>
            <person name="Wang L."/>
            <person name="Jiang B.-L."/>
            <person name="Zeng S."/>
            <person name="Gu W.-Y."/>
            <person name="Lu G."/>
            <person name="Rong L."/>
            <person name="Tian Y."/>
            <person name="Yao Z."/>
            <person name="Fu G."/>
            <person name="Chen B."/>
            <person name="Fang R."/>
            <person name="Qiang B."/>
            <person name="Chen Z."/>
            <person name="Zhao G.-P."/>
            <person name="Tang J.-L."/>
            <person name="He C."/>
        </authorList>
    </citation>
    <scope>NUCLEOTIDE SEQUENCE [LARGE SCALE GENOMIC DNA]</scope>
    <source>
        <strain>8004</strain>
    </source>
</reference>
<evidence type="ECO:0000255" key="1">
    <source>
        <dbReference type="HAMAP-Rule" id="MF_01398"/>
    </source>
</evidence>
<dbReference type="EMBL" id="CP000050">
    <property type="protein sequence ID" value="AAY50723.1"/>
    <property type="molecule type" value="Genomic_DNA"/>
</dbReference>
<dbReference type="RefSeq" id="WP_011035797.1">
    <property type="nucleotide sequence ID" value="NZ_CP155948.1"/>
</dbReference>
<dbReference type="SMR" id="Q4UQF0"/>
<dbReference type="KEGG" id="xcb:XC_3682"/>
<dbReference type="HOGENOM" id="CLU_079215_4_5_6"/>
<dbReference type="Proteomes" id="UP000000420">
    <property type="component" value="Chromosome"/>
</dbReference>
<dbReference type="GO" id="GO:0005886">
    <property type="term" value="C:plasma membrane"/>
    <property type="evidence" value="ECO:0007669"/>
    <property type="project" value="UniProtKB-SubCell"/>
</dbReference>
<dbReference type="GO" id="GO:0045259">
    <property type="term" value="C:proton-transporting ATP synthase complex"/>
    <property type="evidence" value="ECO:0007669"/>
    <property type="project" value="UniProtKB-KW"/>
</dbReference>
<dbReference type="GO" id="GO:0046933">
    <property type="term" value="F:proton-transporting ATP synthase activity, rotational mechanism"/>
    <property type="evidence" value="ECO:0007669"/>
    <property type="project" value="UniProtKB-UniRule"/>
</dbReference>
<dbReference type="GO" id="GO:0046961">
    <property type="term" value="F:proton-transporting ATPase activity, rotational mechanism"/>
    <property type="evidence" value="ECO:0007669"/>
    <property type="project" value="TreeGrafter"/>
</dbReference>
<dbReference type="CDD" id="cd06503">
    <property type="entry name" value="ATP-synt_Fo_b"/>
    <property type="match status" value="1"/>
</dbReference>
<dbReference type="Gene3D" id="6.10.250.1580">
    <property type="match status" value="1"/>
</dbReference>
<dbReference type="HAMAP" id="MF_01398">
    <property type="entry name" value="ATP_synth_b_bprime"/>
    <property type="match status" value="1"/>
</dbReference>
<dbReference type="InterPro" id="IPR028987">
    <property type="entry name" value="ATP_synth_B-like_membr_sf"/>
</dbReference>
<dbReference type="InterPro" id="IPR002146">
    <property type="entry name" value="ATP_synth_b/b'su_bac/chlpt"/>
</dbReference>
<dbReference type="InterPro" id="IPR005864">
    <property type="entry name" value="ATP_synth_F0_bsu_bac"/>
</dbReference>
<dbReference type="InterPro" id="IPR050059">
    <property type="entry name" value="ATP_synthase_B_chain"/>
</dbReference>
<dbReference type="NCBIfam" id="TIGR01144">
    <property type="entry name" value="ATP_synt_b"/>
    <property type="match status" value="1"/>
</dbReference>
<dbReference type="NCBIfam" id="NF004411">
    <property type="entry name" value="PRK05759.1-2"/>
    <property type="match status" value="1"/>
</dbReference>
<dbReference type="PANTHER" id="PTHR33445:SF1">
    <property type="entry name" value="ATP SYNTHASE SUBUNIT B"/>
    <property type="match status" value="1"/>
</dbReference>
<dbReference type="PANTHER" id="PTHR33445">
    <property type="entry name" value="ATP SYNTHASE SUBUNIT B', CHLOROPLASTIC"/>
    <property type="match status" value="1"/>
</dbReference>
<dbReference type="Pfam" id="PF00430">
    <property type="entry name" value="ATP-synt_B"/>
    <property type="match status" value="1"/>
</dbReference>
<dbReference type="SUPFAM" id="SSF81573">
    <property type="entry name" value="F1F0 ATP synthase subunit B, membrane domain"/>
    <property type="match status" value="1"/>
</dbReference>
<proteinExistence type="inferred from homology"/>
<comment type="function">
    <text evidence="1">F(1)F(0) ATP synthase produces ATP from ADP in the presence of a proton or sodium gradient. F-type ATPases consist of two structural domains, F(1) containing the extramembraneous catalytic core and F(0) containing the membrane proton channel, linked together by a central stalk and a peripheral stalk. During catalysis, ATP synthesis in the catalytic domain of F(1) is coupled via a rotary mechanism of the central stalk subunits to proton translocation.</text>
</comment>
<comment type="function">
    <text evidence="1">Component of the F(0) channel, it forms part of the peripheral stalk, linking F(1) to F(0).</text>
</comment>
<comment type="subunit">
    <text evidence="1">F-type ATPases have 2 components, F(1) - the catalytic core - and F(0) - the membrane proton channel. F(1) has five subunits: alpha(3), beta(3), gamma(1), delta(1), epsilon(1). F(0) has three main subunits: a(1), b(2) and c(10-14). The alpha and beta chains form an alternating ring which encloses part of the gamma chain. F(1) is attached to F(0) by a central stalk formed by the gamma and epsilon chains, while a peripheral stalk is formed by the delta and b chains.</text>
</comment>
<comment type="subcellular location">
    <subcellularLocation>
        <location evidence="1">Cell inner membrane</location>
        <topology evidence="1">Single-pass membrane protein</topology>
    </subcellularLocation>
</comment>
<comment type="similarity">
    <text evidence="1">Belongs to the ATPase B chain family.</text>
</comment>
<accession>Q4UQF0</accession>
<organism>
    <name type="scientific">Xanthomonas campestris pv. campestris (strain 8004)</name>
    <dbReference type="NCBI Taxonomy" id="314565"/>
    <lineage>
        <taxon>Bacteria</taxon>
        <taxon>Pseudomonadati</taxon>
        <taxon>Pseudomonadota</taxon>
        <taxon>Gammaproteobacteria</taxon>
        <taxon>Lysobacterales</taxon>
        <taxon>Lysobacteraceae</taxon>
        <taxon>Xanthomonas</taxon>
    </lineage>
</organism>
<keyword id="KW-0066">ATP synthesis</keyword>
<keyword id="KW-0997">Cell inner membrane</keyword>
<keyword id="KW-1003">Cell membrane</keyword>
<keyword id="KW-0138">CF(0)</keyword>
<keyword id="KW-0375">Hydrogen ion transport</keyword>
<keyword id="KW-0406">Ion transport</keyword>
<keyword id="KW-0472">Membrane</keyword>
<keyword id="KW-0812">Transmembrane</keyword>
<keyword id="KW-1133">Transmembrane helix</keyword>
<keyword id="KW-0813">Transport</keyword>